<comment type="function">
    <text>Degrades starch to alpha-, beta-, and gamma-cyclodextrins, as well as linear sugars.</text>
</comment>
<comment type="catalytic activity">
    <reaction>
        <text>Cyclizes part of a (1-&gt;4)-alpha-D-glucan chain by formation of a (1-&gt;4)-alpha-D-glucosidic bond.</text>
        <dbReference type="EC" id="2.4.1.19"/>
    </reaction>
</comment>
<comment type="cofactor">
    <cofactor>
        <name>Ca(2+)</name>
        <dbReference type="ChEBI" id="CHEBI:29108"/>
    </cofactor>
    <text>Binds 2 calcium ions per subunit.</text>
</comment>
<comment type="subcellular location">
    <subcellularLocation>
        <location evidence="3">Secreted</location>
    </subcellularLocation>
</comment>
<comment type="similarity">
    <text evidence="5">Belongs to the glycosyl hydrolase 13 family.</text>
</comment>
<comment type="caution">
    <text evidence="6">Was originally thought to be an alpha-amylase.</text>
</comment>
<feature type="signal peptide" evidence="3">
    <location>
        <begin position="1"/>
        <end position="27"/>
    </location>
</feature>
<feature type="chain" id="PRO_0000001444" description="Cyclomaltodextrin glucanotransferase">
    <location>
        <begin position="28"/>
        <end position="710"/>
    </location>
</feature>
<feature type="domain" description="IPT/TIG">
    <location>
        <begin position="526"/>
        <end position="603"/>
    </location>
</feature>
<feature type="domain" description="CBM20" evidence="2">
    <location>
        <begin position="605"/>
        <end position="710"/>
    </location>
</feature>
<feature type="active site" description="Nucleophile" evidence="4">
    <location>
        <position position="257"/>
    </location>
</feature>
<feature type="active site" description="Proton donor" evidence="4">
    <location>
        <position position="285"/>
    </location>
</feature>
<feature type="binding site">
    <location>
        <position position="54"/>
    </location>
    <ligand>
        <name>Ca(2+)</name>
        <dbReference type="ChEBI" id="CHEBI:29108"/>
        <label>1</label>
    </ligand>
</feature>
<feature type="binding site">
    <location>
        <position position="56"/>
    </location>
    <ligand>
        <name>Ca(2+)</name>
        <dbReference type="ChEBI" id="CHEBI:29108"/>
        <label>1</label>
    </ligand>
</feature>
<feature type="binding site">
    <location>
        <position position="59"/>
    </location>
    <ligand>
        <name>Ca(2+)</name>
        <dbReference type="ChEBI" id="CHEBI:29108"/>
        <label>1</label>
    </ligand>
</feature>
<feature type="binding site">
    <location>
        <position position="60"/>
    </location>
    <ligand>
        <name>Ca(2+)</name>
        <dbReference type="ChEBI" id="CHEBI:29108"/>
        <label>1</label>
    </ligand>
</feature>
<feature type="binding site">
    <location>
        <position position="78"/>
    </location>
    <ligand>
        <name>Ca(2+)</name>
        <dbReference type="ChEBI" id="CHEBI:29108"/>
        <label>1</label>
    </ligand>
</feature>
<feature type="binding site">
    <location>
        <position position="80"/>
    </location>
    <ligand>
        <name>Ca(2+)</name>
        <dbReference type="ChEBI" id="CHEBI:29108"/>
        <label>1</label>
    </ligand>
</feature>
<feature type="binding site">
    <location>
        <begin position="128"/>
        <end position="129"/>
    </location>
    <ligand>
        <name>substrate</name>
    </ligand>
</feature>
<feature type="binding site">
    <location>
        <position position="167"/>
    </location>
    <ligand>
        <name>Ca(2+)</name>
        <dbReference type="ChEBI" id="CHEBI:29108"/>
        <label>2</label>
    </ligand>
</feature>
<feature type="binding site" evidence="1">
    <location>
        <position position="168"/>
    </location>
    <ligand>
        <name>substrate</name>
    </ligand>
</feature>
<feature type="binding site">
    <location>
        <position position="218"/>
    </location>
    <ligand>
        <name>Ca(2+)</name>
        <dbReference type="ChEBI" id="CHEBI:29108"/>
        <label>2</label>
    </ligand>
</feature>
<feature type="binding site" evidence="1">
    <location>
        <begin position="221"/>
        <end position="224"/>
    </location>
    <ligand>
        <name>substrate</name>
    </ligand>
</feature>
<feature type="binding site">
    <location>
        <position position="227"/>
    </location>
    <ligand>
        <name>Ca(2+)</name>
        <dbReference type="ChEBI" id="CHEBI:29108"/>
        <label>2</label>
    </ligand>
</feature>
<feature type="binding site" evidence="1">
    <location>
        <position position="255"/>
    </location>
    <ligand>
        <name>substrate</name>
    </ligand>
</feature>
<feature type="binding site">
    <location>
        <begin position="260"/>
        <end position="261"/>
    </location>
    <ligand>
        <name>substrate</name>
    </ligand>
</feature>
<feature type="binding site">
    <location>
        <position position="261"/>
    </location>
    <ligand>
        <name>Ca(2+)</name>
        <dbReference type="ChEBI" id="CHEBI:29108"/>
        <label>2</label>
    </ligand>
</feature>
<feature type="binding site" evidence="1">
    <location>
        <position position="355"/>
    </location>
    <ligand>
        <name>substrate</name>
    </ligand>
</feature>
<feature type="binding site">
    <location>
        <position position="398"/>
    </location>
    <ligand>
        <name>substrate</name>
    </ligand>
</feature>
<feature type="binding site">
    <location>
        <position position="402"/>
    </location>
    <ligand>
        <name>substrate</name>
    </ligand>
</feature>
<feature type="site" description="Transition state stabilizer" evidence="1">
    <location>
        <position position="356"/>
    </location>
</feature>
<feature type="sequence conflict" description="In Ref. 3; no nucleotide entry." evidence="5" ref="3">
    <location>
        <position position="128"/>
    </location>
</feature>
<feature type="sequence conflict" description="In Ref. 3; no nucleotide entry." evidence="5" ref="3">
    <original>FKRTNP</original>
    <variation>LREQS</variation>
    <location>
        <begin position="133"/>
        <end position="138"/>
    </location>
</feature>
<feature type="sequence conflict" description="In Ref. 1; AA sequence." evidence="5" ref="1">
    <original>EQYMTGNGD</original>
    <variation>VYDRQWR</variation>
    <location>
        <begin position="390"/>
        <end position="398"/>
    </location>
</feature>
<feature type="strand" evidence="7">
    <location>
        <begin position="44"/>
        <end position="46"/>
    </location>
</feature>
<feature type="helix" evidence="7">
    <location>
        <begin position="49"/>
        <end position="51"/>
    </location>
</feature>
<feature type="helix" evidence="7">
    <location>
        <begin position="57"/>
        <end position="59"/>
    </location>
</feature>
<feature type="helix" evidence="7">
    <location>
        <begin position="63"/>
        <end position="65"/>
    </location>
</feature>
<feature type="helix" evidence="7">
    <location>
        <begin position="81"/>
        <end position="89"/>
    </location>
</feature>
<feature type="helix" evidence="7">
    <location>
        <begin position="94"/>
        <end position="96"/>
    </location>
</feature>
<feature type="strand" evidence="7">
    <location>
        <begin position="100"/>
        <end position="103"/>
    </location>
</feature>
<feature type="strand" evidence="7">
    <location>
        <begin position="107"/>
        <end position="109"/>
    </location>
</feature>
<feature type="strand" evidence="7">
    <location>
        <begin position="114"/>
        <end position="116"/>
    </location>
</feature>
<feature type="turn" evidence="7">
    <location>
        <begin position="117"/>
        <end position="119"/>
    </location>
</feature>
<feature type="strand" evidence="7">
    <location>
        <begin position="120"/>
        <end position="122"/>
    </location>
</feature>
<feature type="strand" evidence="7">
    <location>
        <begin position="129"/>
        <end position="136"/>
    </location>
</feature>
<feature type="turn" evidence="7">
    <location>
        <begin position="138"/>
        <end position="140"/>
    </location>
</feature>
<feature type="helix" evidence="7">
    <location>
        <begin position="143"/>
        <end position="155"/>
    </location>
</feature>
<feature type="strand" evidence="7">
    <location>
        <begin position="159"/>
        <end position="164"/>
    </location>
</feature>
<feature type="strand" evidence="7">
    <location>
        <begin position="168"/>
        <end position="171"/>
    </location>
</feature>
<feature type="turn" evidence="7">
    <location>
        <begin position="180"/>
        <end position="183"/>
    </location>
</feature>
<feature type="strand" evidence="7">
    <location>
        <begin position="185"/>
        <end position="187"/>
    </location>
</feature>
<feature type="strand" evidence="7">
    <location>
        <begin position="190"/>
        <end position="193"/>
    </location>
</feature>
<feature type="strand" evidence="8">
    <location>
        <begin position="211"/>
        <end position="213"/>
    </location>
</feature>
<feature type="helix" evidence="7">
    <location>
        <begin position="214"/>
        <end position="219"/>
    </location>
</feature>
<feature type="strand" evidence="7">
    <location>
        <begin position="220"/>
        <end position="222"/>
    </location>
</feature>
<feature type="strand" evidence="7">
    <location>
        <begin position="225"/>
        <end position="228"/>
    </location>
</feature>
<feature type="helix" evidence="7">
    <location>
        <begin position="233"/>
        <end position="248"/>
    </location>
</feature>
<feature type="strand" evidence="7">
    <location>
        <begin position="253"/>
        <end position="257"/>
    </location>
</feature>
<feature type="helix" evidence="7">
    <location>
        <begin position="259"/>
        <end position="261"/>
    </location>
</feature>
<feature type="helix" evidence="7">
    <location>
        <begin position="264"/>
        <end position="277"/>
    </location>
</feature>
<feature type="strand" evidence="7">
    <location>
        <begin position="281"/>
        <end position="284"/>
    </location>
</feature>
<feature type="helix" evidence="7">
    <location>
        <begin position="295"/>
        <end position="303"/>
    </location>
</feature>
<feature type="strand" evidence="7">
    <location>
        <begin position="304"/>
        <end position="309"/>
    </location>
</feature>
<feature type="helix" evidence="7">
    <location>
        <begin position="311"/>
        <end position="321"/>
    </location>
</feature>
<feature type="helix" evidence="7">
    <location>
        <begin position="328"/>
        <end position="341"/>
    </location>
</feature>
<feature type="helix" evidence="7">
    <location>
        <begin position="345"/>
        <end position="347"/>
    </location>
</feature>
<feature type="strand" evidence="7">
    <location>
        <begin position="355"/>
        <end position="357"/>
    </location>
</feature>
<feature type="helix" evidence="7">
    <location>
        <begin position="367"/>
        <end position="378"/>
    </location>
</feature>
<feature type="strand" evidence="7">
    <location>
        <begin position="379"/>
        <end position="386"/>
    </location>
</feature>
<feature type="helix" evidence="7">
    <location>
        <begin position="389"/>
        <end position="391"/>
    </location>
</feature>
<feature type="helix" evidence="7">
    <location>
        <begin position="400"/>
        <end position="402"/>
    </location>
</feature>
<feature type="helix" evidence="7">
    <location>
        <begin position="413"/>
        <end position="421"/>
    </location>
</feature>
<feature type="helix" evidence="7">
    <location>
        <begin position="424"/>
        <end position="427"/>
    </location>
</feature>
<feature type="helix" evidence="7">
    <location>
        <begin position="429"/>
        <end position="433"/>
    </location>
</feature>
<feature type="strand" evidence="7">
    <location>
        <begin position="435"/>
        <end position="441"/>
    </location>
</feature>
<feature type="strand" evidence="7">
    <location>
        <begin position="443"/>
        <end position="452"/>
    </location>
</feature>
<feature type="strand" evidence="7">
    <location>
        <begin position="455"/>
        <end position="462"/>
    </location>
</feature>
<feature type="strand" evidence="7">
    <location>
        <begin position="469"/>
        <end position="471"/>
    </location>
</feature>
<feature type="strand" evidence="7">
    <location>
        <begin position="480"/>
        <end position="483"/>
    </location>
</feature>
<feature type="turn" evidence="7">
    <location>
        <begin position="486"/>
        <end position="491"/>
    </location>
</feature>
<feature type="strand" evidence="7">
    <location>
        <begin position="496"/>
        <end position="498"/>
    </location>
</feature>
<feature type="strand" evidence="7">
    <location>
        <begin position="502"/>
        <end position="504"/>
    </location>
</feature>
<feature type="strand" evidence="7">
    <location>
        <begin position="507"/>
        <end position="509"/>
    </location>
</feature>
<feature type="strand" evidence="7">
    <location>
        <begin position="514"/>
        <end position="519"/>
    </location>
</feature>
<feature type="strand" evidence="7">
    <location>
        <begin position="527"/>
        <end position="532"/>
    </location>
</feature>
<feature type="strand" evidence="7">
    <location>
        <begin position="534"/>
        <end position="536"/>
    </location>
</feature>
<feature type="strand" evidence="7">
    <location>
        <begin position="541"/>
        <end position="547"/>
    </location>
</feature>
<feature type="strand" evidence="7">
    <location>
        <begin position="555"/>
        <end position="558"/>
    </location>
</feature>
<feature type="strand" evidence="7">
    <location>
        <begin position="564"/>
        <end position="568"/>
    </location>
</feature>
<feature type="strand" evidence="7">
    <location>
        <begin position="570"/>
        <end position="576"/>
    </location>
</feature>
<feature type="strand" evidence="7">
    <location>
        <begin position="582"/>
        <end position="590"/>
    </location>
</feature>
<feature type="strand" evidence="7">
    <location>
        <begin position="600"/>
        <end position="605"/>
    </location>
</feature>
<feature type="strand" evidence="7">
    <location>
        <begin position="607"/>
        <end position="619"/>
    </location>
</feature>
<feature type="strand" evidence="7">
    <location>
        <begin position="627"/>
        <end position="634"/>
    </location>
</feature>
<feature type="helix" evidence="7">
    <location>
        <begin position="635"/>
        <end position="637"/>
    </location>
</feature>
<feature type="turn" evidence="7">
    <location>
        <begin position="638"/>
        <end position="640"/>
    </location>
</feature>
<feature type="helix" evidence="7">
    <location>
        <begin position="642"/>
        <end position="644"/>
    </location>
</feature>
<feature type="strand" evidence="7">
    <location>
        <begin position="652"/>
        <end position="655"/>
    </location>
</feature>
<feature type="strand" evidence="7">
    <location>
        <begin position="659"/>
        <end position="667"/>
    </location>
</feature>
<feature type="strand" evidence="7">
    <location>
        <begin position="671"/>
        <end position="682"/>
    </location>
</feature>
<feature type="strand" evidence="8">
    <location>
        <begin position="684"/>
        <end position="686"/>
    </location>
</feature>
<feature type="strand" evidence="7">
    <location>
        <begin position="692"/>
        <end position="695"/>
    </location>
</feature>
<feature type="strand" evidence="7">
    <location>
        <begin position="698"/>
        <end position="700"/>
    </location>
</feature>
<feature type="strand" evidence="7">
    <location>
        <begin position="702"/>
        <end position="707"/>
    </location>
</feature>
<organism>
    <name type="scientific">Thermoanaerobacterium thermosulfurigenes</name>
    <name type="common">Clostridium thermosulfurogenes</name>
    <dbReference type="NCBI Taxonomy" id="33950"/>
    <lineage>
        <taxon>Bacteria</taxon>
        <taxon>Bacillati</taxon>
        <taxon>Bacillota</taxon>
        <taxon>Clostridia</taxon>
        <taxon>Thermoanaerobacterales</taxon>
        <taxon>Thermoanaerobacteraceae</taxon>
        <taxon>Thermoanaerobacterium</taxon>
    </lineage>
</organism>
<gene>
    <name type="primary">amyA</name>
</gene>
<reference key="1">
    <citation type="journal article" date="1991" name="Appl. Environ. Microbiol.">
        <title>Alpha-amylase of Clostridium thermosulfurogenes EM1: nucleotide sequence of the gene, processing of the enzyme, and comparison of other alpha-amylases.</title>
        <authorList>
            <person name="Bahl H."/>
            <person name="Burchhardt G."/>
            <person name="Spreinat A."/>
            <person name="Haeckel K."/>
            <person name="Wienecke A."/>
            <person name="Schmidt B."/>
            <person name="Antranikian G."/>
        </authorList>
    </citation>
    <scope>NUCLEOTIDE SEQUENCE [GENOMIC DNA]</scope>
    <scope>PROTEIN SEQUENCE OF 28-48</scope>
    <scope>SUBCELLULAR LOCATION</scope>
    <source>
        <strain>DSM 3896 / EM1</strain>
    </source>
</reference>
<reference key="2">
    <citation type="submission" date="1994-11" db="EMBL/GenBank/DDBJ databases">
        <authorList>
            <person name="Sahm K."/>
            <person name="Matuschek M."/>
            <person name="Mueller H."/>
            <person name="Mitchell W.J."/>
            <person name="Bahl H."/>
        </authorList>
    </citation>
    <scope>NUCLEOTIDE SEQUENCE [GENOMIC DNA]</scope>
    <source>
        <strain>DSM 3896 / EM1</strain>
    </source>
</reference>
<reference key="3">
    <citation type="journal article" date="1991" name="FEMS Microbiol. Lett.">
        <title>Nucleotide sequence of two Clostridium thermosulfurogenes EM1 genes homologous to Escherichia coli genes encoding integral membrane components of binding protein-dependent transport systems.</title>
        <authorList>
            <person name="Bahl H."/>
            <person name="Burchhardt G."/>
            <person name="Wienecke A."/>
        </authorList>
    </citation>
    <scope>NUCLEOTIDE SEQUENCE [GENOMIC DNA] OF 1-255</scope>
    <source>
        <strain>DSM 3896 / EM1</strain>
    </source>
</reference>
<reference key="4">
    <citation type="journal article" date="1995" name="Appl. Environ. Microbiol.">
        <title>Cyclodextrin formation by the thermostable alpha-amylase of Thermoanaerobacterium thermosulfurigenes EM1 and reclassification of the enzyme as a cyclodextrin glycosyltransferase.</title>
        <authorList>
            <person name="Wind R.D."/>
            <person name="Liebl W."/>
            <person name="Buitelaar R.M."/>
            <person name="Penninga D."/>
            <person name="Spreinat A."/>
            <person name="Dijkhuizen L."/>
            <person name="Bahl H."/>
        </authorList>
    </citation>
    <scope>CHARACTERIZATION</scope>
</reference>
<reference key="5">
    <citation type="journal article" date="1996" name="J. Mol. Biol.">
        <title>Crystal structure at 2.3 A resolution and revised nucleotide sequence of the thermostable cyclodextrin glycosyltransferase from Thermonanaerobacterium thermosulfurigenes EM1.</title>
        <authorList>
            <person name="Knegtel R.M.A."/>
            <person name="Wind R.D."/>
            <person name="Rozeboom H.J."/>
            <person name="Kalk K.H."/>
            <person name="Buitelaar R.M."/>
            <person name="Dijkhuizen L."/>
            <person name="Dijkstra B.W."/>
        </authorList>
    </citation>
    <scope>X-RAY CRYSTALLOGRAPHY (2.3 ANGSTROMS) OF 28-710</scope>
</reference>
<reference key="6">
    <citation type="journal article" date="1998" name="J. Biol. Chem.">
        <title>Engineering of cyclodextrin product specificity and pH optima of the thermostable cyclodextrin glycosyltransferase from Thermoanaerobacterium thermosulfurigenes EM1.</title>
        <authorList>
            <person name="Wind R.D."/>
            <person name="Uitdehaag J.C."/>
            <person name="Buitelaar R.M."/>
            <person name="Dijkstra B.W."/>
            <person name="Dijkhuizen L."/>
        </authorList>
    </citation>
    <scope>X-RAY CRYSTALLOGRAPHY (2.56 ANGSTROMS) OF 28-710 IN COMPLEX WITH MALTOHEPTAOSE AND CALCIUM IONS</scope>
    <source>
        <strain>DSM 3896 / EM1</strain>
    </source>
</reference>
<sequence length="710" mass="78417">MKKTFKLILVLMLSLTLVFGLTAPIQAASDTAVSNVVNYSTDVIYQIVTDRFVDGNTSNNPTGDLYDPTHTSLKKYFGGDWQGIINKINDGYLTGMGVTAIWISQPVENIYAVLPDSTFGGSTSYHGYWARDFKRTNPYFGSFTDFQNLINTAHAHNIKVIIDFAPNHTSPASETDPTYAENGRLYDNGTLLGGYTNDTNGYFHHYGGTDFSSYEDGIYRNLFDLADLNQQNSTIDSYLKSAIKVWLDMGIDGIRLDAVKHMPFGWQKNFMDSILSYRPVFTFGEWFLGTNEIDVNNTYFANESGMSLLDFRFSQKVRQVFRDNTDTMYGLDSMIQSTASDYNFINDMVTFIDNHDMDRFYNGGSTRPVEQALAFTLTSRGVPAIYYGTEQYMTGNGDPYNRAMMTSFNTSTTAYNVIKKLAPLRKSNPAIAYGTTQQRWINNDVYIYERKFGNNVALVAINRNLSTSYNITGLYTALPAGTYTDVLGGLLNGNSISVASDGSVTPFTLSAGEVAVWQYVSSSNSPLIGHVGPTMTKAGQTITIDGRGFGTTSGQVLFGSTAGTIVSWDDTEVKVKVPSVTPGKYNISLKTSSGATSNTYNNINILTGNQICVRFVVNNASTVYGENVYLTGNVAELGNWDTSKAIGPMFNQVVYQYPTWYYDVSVPAGTTIQFKFIKKNGNTITWEGGSNHTYTVPSSSTGTVIVNWQQ</sequence>
<accession>P26827</accession>
<keyword id="KW-0002">3D-structure</keyword>
<keyword id="KW-0106">Calcium</keyword>
<keyword id="KW-0903">Direct protein sequencing</keyword>
<keyword id="KW-0328">Glycosyltransferase</keyword>
<keyword id="KW-0479">Metal-binding</keyword>
<keyword id="KW-0964">Secreted</keyword>
<keyword id="KW-0732">Signal</keyword>
<keyword id="KW-0808">Transferase</keyword>
<protein>
    <recommendedName>
        <fullName>Cyclomaltodextrin glucanotransferase</fullName>
        <ecNumber>2.4.1.19</ecNumber>
    </recommendedName>
    <alternativeName>
        <fullName>Cyclodextrin-glycosyltransferase</fullName>
        <shortName>CGTase</shortName>
    </alternativeName>
</protein>
<evidence type="ECO:0000250" key="1"/>
<evidence type="ECO:0000255" key="2">
    <source>
        <dbReference type="PROSITE-ProRule" id="PRU00594"/>
    </source>
</evidence>
<evidence type="ECO:0000269" key="3">
    <source>
    </source>
</evidence>
<evidence type="ECO:0000269" key="4">
    <source>
    </source>
</evidence>
<evidence type="ECO:0000305" key="5"/>
<evidence type="ECO:0000305" key="6">
    <source>
    </source>
</evidence>
<evidence type="ECO:0007829" key="7">
    <source>
        <dbReference type="PDB" id="3BMV"/>
    </source>
</evidence>
<evidence type="ECO:0007829" key="8">
    <source>
        <dbReference type="PDB" id="3BMW"/>
    </source>
</evidence>
<proteinExistence type="evidence at protein level"/>
<name>CDGT_THETU</name>
<dbReference type="EC" id="2.4.1.19"/>
<dbReference type="EMBL" id="M57692">
    <property type="protein sequence ID" value="AAB00845.1"/>
    <property type="molecule type" value="Genomic_DNA"/>
</dbReference>
<dbReference type="PIR" id="S63598">
    <property type="entry name" value="S63598"/>
</dbReference>
<dbReference type="PDB" id="1A47">
    <property type="method" value="X-ray"/>
    <property type="resolution" value="2.56 A"/>
    <property type="chains" value="A=28-710"/>
</dbReference>
<dbReference type="PDB" id="1CIU">
    <property type="method" value="X-ray"/>
    <property type="resolution" value="2.30 A"/>
    <property type="chains" value="A=28-710"/>
</dbReference>
<dbReference type="PDB" id="3BMV">
    <property type="method" value="X-ray"/>
    <property type="resolution" value="1.60 A"/>
    <property type="chains" value="A=28-710"/>
</dbReference>
<dbReference type="PDB" id="3BMW">
    <property type="method" value="X-ray"/>
    <property type="resolution" value="1.60 A"/>
    <property type="chains" value="A=28-710"/>
</dbReference>
<dbReference type="PDBsum" id="1A47"/>
<dbReference type="PDBsum" id="1CIU"/>
<dbReference type="PDBsum" id="3BMV"/>
<dbReference type="PDBsum" id="3BMW"/>
<dbReference type="SMR" id="P26827"/>
<dbReference type="DrugBank" id="DB03773">
    <property type="generic name" value="alpha-D-quinovopyranose"/>
</dbReference>
<dbReference type="DrugBank" id="DB02379">
    <property type="generic name" value="Beta-D-Glucose"/>
</dbReference>
<dbReference type="CAZy" id="CBM20">
    <property type="family name" value="Carbohydrate-Binding Module Family 20"/>
</dbReference>
<dbReference type="CAZy" id="GH13">
    <property type="family name" value="Glycoside Hydrolase Family 13"/>
</dbReference>
<dbReference type="BRENDA" id="2.4.1.19">
    <property type="organism ID" value="1534"/>
</dbReference>
<dbReference type="SABIO-RK" id="P26827"/>
<dbReference type="EvolutionaryTrace" id="P26827"/>
<dbReference type="GO" id="GO:0005576">
    <property type="term" value="C:extracellular region"/>
    <property type="evidence" value="ECO:0007669"/>
    <property type="project" value="UniProtKB-SubCell"/>
</dbReference>
<dbReference type="GO" id="GO:0004556">
    <property type="term" value="F:alpha-amylase activity"/>
    <property type="evidence" value="ECO:0007669"/>
    <property type="project" value="InterPro"/>
</dbReference>
<dbReference type="GO" id="GO:0043895">
    <property type="term" value="F:cyclomaltodextrin glucanotransferase activity"/>
    <property type="evidence" value="ECO:0007669"/>
    <property type="project" value="UniProtKB-EC"/>
</dbReference>
<dbReference type="GO" id="GO:0046872">
    <property type="term" value="F:metal ion binding"/>
    <property type="evidence" value="ECO:0007669"/>
    <property type="project" value="UniProtKB-KW"/>
</dbReference>
<dbReference type="GO" id="GO:2001070">
    <property type="term" value="F:starch binding"/>
    <property type="evidence" value="ECO:0007669"/>
    <property type="project" value="InterPro"/>
</dbReference>
<dbReference type="GO" id="GO:0005975">
    <property type="term" value="P:carbohydrate metabolic process"/>
    <property type="evidence" value="ECO:0007669"/>
    <property type="project" value="InterPro"/>
</dbReference>
<dbReference type="CDD" id="cd11320">
    <property type="entry name" value="AmyAc_AmyMalt_CGTase_like"/>
    <property type="match status" value="1"/>
</dbReference>
<dbReference type="CDD" id="cd05807">
    <property type="entry name" value="CBM20_CGTase"/>
    <property type="match status" value="1"/>
</dbReference>
<dbReference type="CDD" id="cd00604">
    <property type="entry name" value="IPT_CGTD"/>
    <property type="match status" value="1"/>
</dbReference>
<dbReference type="Gene3D" id="3.20.20.80">
    <property type="entry name" value="Glycosidases"/>
    <property type="match status" value="1"/>
</dbReference>
<dbReference type="Gene3D" id="2.60.40.1180">
    <property type="entry name" value="Golgi alpha-mannosidase II"/>
    <property type="match status" value="1"/>
</dbReference>
<dbReference type="Gene3D" id="2.60.40.10">
    <property type="entry name" value="Immunoglobulins"/>
    <property type="match status" value="2"/>
</dbReference>
<dbReference type="InterPro" id="IPR006048">
    <property type="entry name" value="A-amylase/branching_C"/>
</dbReference>
<dbReference type="InterPro" id="IPR031319">
    <property type="entry name" value="A-amylase_C"/>
</dbReference>
<dbReference type="InterPro" id="IPR006046">
    <property type="entry name" value="Alpha_amylase"/>
</dbReference>
<dbReference type="InterPro" id="IPR013784">
    <property type="entry name" value="Carb-bd-like_fold"/>
</dbReference>
<dbReference type="InterPro" id="IPR002044">
    <property type="entry name" value="CBM20"/>
</dbReference>
<dbReference type="InterPro" id="IPR006047">
    <property type="entry name" value="Glyco_hydro_13_cat_dom"/>
</dbReference>
<dbReference type="InterPro" id="IPR013780">
    <property type="entry name" value="Glyco_hydro_b"/>
</dbReference>
<dbReference type="InterPro" id="IPR017853">
    <property type="entry name" value="Glycoside_hydrolase_SF"/>
</dbReference>
<dbReference type="InterPro" id="IPR013783">
    <property type="entry name" value="Ig-like_fold"/>
</dbReference>
<dbReference type="InterPro" id="IPR014756">
    <property type="entry name" value="Ig_E-set"/>
</dbReference>
<dbReference type="InterPro" id="IPR002909">
    <property type="entry name" value="IPT_dom"/>
</dbReference>
<dbReference type="PANTHER" id="PTHR10357:SF215">
    <property type="entry name" value="ALPHA-AMYLASE 1"/>
    <property type="match status" value="1"/>
</dbReference>
<dbReference type="PANTHER" id="PTHR10357">
    <property type="entry name" value="ALPHA-AMYLASE FAMILY MEMBER"/>
    <property type="match status" value="1"/>
</dbReference>
<dbReference type="Pfam" id="PF00128">
    <property type="entry name" value="Alpha-amylase"/>
    <property type="match status" value="1"/>
</dbReference>
<dbReference type="Pfam" id="PF02806">
    <property type="entry name" value="Alpha-amylase_C"/>
    <property type="match status" value="1"/>
</dbReference>
<dbReference type="Pfam" id="PF00686">
    <property type="entry name" value="CBM_20"/>
    <property type="match status" value="1"/>
</dbReference>
<dbReference type="Pfam" id="PF01833">
    <property type="entry name" value="TIG"/>
    <property type="match status" value="1"/>
</dbReference>
<dbReference type="PRINTS" id="PR00110">
    <property type="entry name" value="ALPHAAMYLASE"/>
</dbReference>
<dbReference type="SMART" id="SM00642">
    <property type="entry name" value="Aamy"/>
    <property type="match status" value="1"/>
</dbReference>
<dbReference type="SMART" id="SM00632">
    <property type="entry name" value="Aamy_C"/>
    <property type="match status" value="1"/>
</dbReference>
<dbReference type="SMART" id="SM01065">
    <property type="entry name" value="CBM_2"/>
    <property type="match status" value="1"/>
</dbReference>
<dbReference type="SUPFAM" id="SSF51445">
    <property type="entry name" value="(Trans)glycosidases"/>
    <property type="match status" value="1"/>
</dbReference>
<dbReference type="SUPFAM" id="SSF81296">
    <property type="entry name" value="E set domains"/>
    <property type="match status" value="1"/>
</dbReference>
<dbReference type="SUPFAM" id="SSF51011">
    <property type="entry name" value="Glycosyl hydrolase domain"/>
    <property type="match status" value="1"/>
</dbReference>
<dbReference type="SUPFAM" id="SSF49452">
    <property type="entry name" value="Starch-binding domain-like"/>
    <property type="match status" value="1"/>
</dbReference>
<dbReference type="PROSITE" id="PS51166">
    <property type="entry name" value="CBM20"/>
    <property type="match status" value="1"/>
</dbReference>